<evidence type="ECO:0000250" key="1"/>
<evidence type="ECO:0000255" key="2">
    <source>
        <dbReference type="PROSITE-ProRule" id="PRU10110"/>
    </source>
</evidence>
<evidence type="ECO:0000305" key="3"/>
<accession>P79075</accession>
<feature type="chain" id="PRO_0000134662" description="Orotidine 5'-phosphate decarboxylase">
    <location>
        <begin position="1"/>
        <end position="265"/>
    </location>
</feature>
<feature type="active site" description="Proton donor" evidence="2">
    <location>
        <position position="94"/>
    </location>
</feature>
<feature type="binding site" evidence="1">
    <location>
        <position position="38"/>
    </location>
    <ligand>
        <name>substrate</name>
    </ligand>
</feature>
<feature type="binding site" evidence="1">
    <location>
        <begin position="60"/>
        <end position="62"/>
    </location>
    <ligand>
        <name>substrate</name>
    </ligand>
</feature>
<feature type="binding site" evidence="1">
    <location>
        <begin position="92"/>
        <end position="101"/>
    </location>
    <ligand>
        <name>substrate</name>
    </ligand>
</feature>
<feature type="binding site" evidence="1">
    <location>
        <position position="218"/>
    </location>
    <ligand>
        <name>substrate</name>
    </ligand>
</feature>
<feature type="binding site" evidence="1">
    <location>
        <position position="236"/>
    </location>
    <ligand>
        <name>substrate</name>
    </ligand>
</feature>
<protein>
    <recommendedName>
        <fullName>Orotidine 5'-phosphate decarboxylase</fullName>
        <ecNumber>4.1.1.23</ecNumber>
    </recommendedName>
    <alternativeName>
        <fullName>OMP decarboxylase</fullName>
        <shortName>OMPDCase</shortName>
        <shortName>OMPdecase</shortName>
    </alternativeName>
    <alternativeName>
        <fullName>Uridine 5'-monophosphate synthase</fullName>
        <shortName>UMP synthase</shortName>
    </alternativeName>
</protein>
<name>PYRF_CYBFA</name>
<dbReference type="EC" id="4.1.1.23"/>
<dbReference type="EMBL" id="AB001561">
    <property type="protein sequence ID" value="BAA19409.1"/>
    <property type="molecule type" value="Genomic_DNA"/>
</dbReference>
<dbReference type="SMR" id="P79075"/>
<dbReference type="VEuPathDB" id="FungiDB:BON22_2810"/>
<dbReference type="UniPathway" id="UPA00070">
    <property type="reaction ID" value="UER00120"/>
</dbReference>
<dbReference type="GO" id="GO:0005829">
    <property type="term" value="C:cytosol"/>
    <property type="evidence" value="ECO:0007669"/>
    <property type="project" value="TreeGrafter"/>
</dbReference>
<dbReference type="GO" id="GO:0004590">
    <property type="term" value="F:orotidine-5'-phosphate decarboxylase activity"/>
    <property type="evidence" value="ECO:0007669"/>
    <property type="project" value="UniProtKB-EC"/>
</dbReference>
<dbReference type="GO" id="GO:0006207">
    <property type="term" value="P:'de novo' pyrimidine nucleobase biosynthetic process"/>
    <property type="evidence" value="ECO:0007669"/>
    <property type="project" value="InterPro"/>
</dbReference>
<dbReference type="GO" id="GO:0044205">
    <property type="term" value="P:'de novo' UMP biosynthetic process"/>
    <property type="evidence" value="ECO:0007669"/>
    <property type="project" value="UniProtKB-UniPathway"/>
</dbReference>
<dbReference type="CDD" id="cd04725">
    <property type="entry name" value="OMP_decarboxylase_like"/>
    <property type="match status" value="1"/>
</dbReference>
<dbReference type="FunFam" id="3.20.20.70:FF:000114">
    <property type="entry name" value="Decarboxylase,orotidine phosphate"/>
    <property type="match status" value="1"/>
</dbReference>
<dbReference type="Gene3D" id="3.20.20.70">
    <property type="entry name" value="Aldolase class I"/>
    <property type="match status" value="1"/>
</dbReference>
<dbReference type="InterPro" id="IPR013785">
    <property type="entry name" value="Aldolase_TIM"/>
</dbReference>
<dbReference type="InterPro" id="IPR014732">
    <property type="entry name" value="OMPdecase"/>
</dbReference>
<dbReference type="InterPro" id="IPR018089">
    <property type="entry name" value="OMPdecase_AS"/>
</dbReference>
<dbReference type="InterPro" id="IPR001754">
    <property type="entry name" value="OMPdeCOase_dom"/>
</dbReference>
<dbReference type="InterPro" id="IPR011060">
    <property type="entry name" value="RibuloseP-bd_barrel"/>
</dbReference>
<dbReference type="NCBIfam" id="TIGR01740">
    <property type="entry name" value="pyrF"/>
    <property type="match status" value="1"/>
</dbReference>
<dbReference type="PANTHER" id="PTHR32119">
    <property type="entry name" value="OROTIDINE 5'-PHOSPHATE DECARBOXYLASE"/>
    <property type="match status" value="1"/>
</dbReference>
<dbReference type="PANTHER" id="PTHR32119:SF2">
    <property type="entry name" value="OROTIDINE 5'-PHOSPHATE DECARBOXYLASE"/>
    <property type="match status" value="1"/>
</dbReference>
<dbReference type="Pfam" id="PF00215">
    <property type="entry name" value="OMPdecase"/>
    <property type="match status" value="1"/>
</dbReference>
<dbReference type="SMART" id="SM00934">
    <property type="entry name" value="OMPdecase"/>
    <property type="match status" value="1"/>
</dbReference>
<dbReference type="SUPFAM" id="SSF51366">
    <property type="entry name" value="Ribulose-phoshate binding barrel"/>
    <property type="match status" value="1"/>
</dbReference>
<dbReference type="PROSITE" id="PS00156">
    <property type="entry name" value="OMPDECASE"/>
    <property type="match status" value="1"/>
</dbReference>
<proteinExistence type="inferred from homology"/>
<gene>
    <name type="primary">URA3</name>
</gene>
<comment type="catalytic activity">
    <reaction evidence="2">
        <text>orotidine 5'-phosphate + H(+) = UMP + CO2</text>
        <dbReference type="Rhea" id="RHEA:11596"/>
        <dbReference type="ChEBI" id="CHEBI:15378"/>
        <dbReference type="ChEBI" id="CHEBI:16526"/>
        <dbReference type="ChEBI" id="CHEBI:57538"/>
        <dbReference type="ChEBI" id="CHEBI:57865"/>
        <dbReference type="EC" id="4.1.1.23"/>
    </reaction>
</comment>
<comment type="pathway">
    <text>Pyrimidine metabolism; UMP biosynthesis via de novo pathway; UMP from orotate: step 2/2.</text>
</comment>
<comment type="similarity">
    <text evidence="3">Belongs to the OMP decarboxylase family.</text>
</comment>
<sequence>MVTTLSYTQRAEAHPSPLAKRLFTVMEQKKSNLCASIDVKTTDEFLSLVDTLGPYICLVKTHIDIIDDFSFEGTIVPLKKLAEKHNFLIFEDRKFADIGKTVKNQYASGVFKIAQWSDITNAHGVTGAGIVKGLKEAAQETTDEPRGLLMLAELSSKGSLATGEYTKQTVDIAKTDKDFVIGFIAQRDMGGHDEGFDWLIMTPGVGLDDKGDGLGQQYRGVDEVVAGGSDIIIVGRGLFGKGRDPAVEGERYRSAGWNAYLKRCQ</sequence>
<keyword id="KW-0210">Decarboxylase</keyword>
<keyword id="KW-0456">Lyase</keyword>
<keyword id="KW-0665">Pyrimidine biosynthesis</keyword>
<reference key="1">
    <citation type="journal article" date="1997" name="Appl. Microbiol. Biotechnol.">
        <title>Transformation system for a wastewater treatment yeast, Hansenula fabianii J640: isolation of the orotidine-5'-phosphate decarboxylase gene (URA3) and uracil auxotrophic mutants.</title>
        <authorList>
            <person name="Kato M."/>
            <person name="Iefuji H."/>
            <person name="Miyake K."/>
            <person name="Iimura Y."/>
        </authorList>
    </citation>
    <scope>NUCLEOTIDE SEQUENCE [GENOMIC DNA]</scope>
    <source>
        <strain>J640</strain>
    </source>
</reference>
<organism>
    <name type="scientific">Cyberlindnera fabianii</name>
    <name type="common">Yeast</name>
    <name type="synonym">Hansenula fabianii</name>
    <dbReference type="NCBI Taxonomy" id="36022"/>
    <lineage>
        <taxon>Eukaryota</taxon>
        <taxon>Fungi</taxon>
        <taxon>Dikarya</taxon>
        <taxon>Ascomycota</taxon>
        <taxon>Saccharomycotina</taxon>
        <taxon>Saccharomycetes</taxon>
        <taxon>Phaffomycetales</taxon>
        <taxon>Phaffomycetaceae</taxon>
        <taxon>Cyberlindnera</taxon>
    </lineage>
</organism>